<keyword id="KW-1185">Reference proteome</keyword>
<keyword id="KW-0749">Sporulation</keyword>
<accession>O07919</accession>
<accession>Q795Z6</accession>
<organism>
    <name type="scientific">Bacillus subtilis (strain 168)</name>
    <dbReference type="NCBI Taxonomy" id="224308"/>
    <lineage>
        <taxon>Bacteria</taxon>
        <taxon>Bacillati</taxon>
        <taxon>Bacillota</taxon>
        <taxon>Bacilli</taxon>
        <taxon>Bacillales</taxon>
        <taxon>Bacillaceae</taxon>
        <taxon>Bacillus</taxon>
    </lineage>
</organism>
<protein>
    <recommendedName>
        <fullName>Spore coat protein F-like protein YraG</fullName>
    </recommendedName>
</protein>
<reference key="1">
    <citation type="journal article" date="1997" name="Microbiology">
        <title>A 23911 bp region of the Bacillus subtilis genome comprising genes located upstream and downstream of the lev operon.</title>
        <authorList>
            <person name="Parro V."/>
            <person name="San Roman M."/>
            <person name="Galindo I."/>
            <person name="Purnelle B."/>
            <person name="Bolotin A."/>
            <person name="Sorokin A."/>
            <person name="Mellado R.P."/>
        </authorList>
    </citation>
    <scope>NUCLEOTIDE SEQUENCE [GENOMIC DNA]</scope>
    <source>
        <strain>168</strain>
    </source>
</reference>
<reference key="2">
    <citation type="journal article" date="1997" name="Microbiology">
        <title>Sequence of the Bacillus subtilis genome region in the vicinity of the lev operon reveals two new extracytoplasmic function RNA polymerase sigma factors SigV and SigZ.</title>
        <authorList>
            <person name="Sorokin A."/>
            <person name="Bolotin A."/>
            <person name="Purnelle B."/>
            <person name="Hilbert H."/>
            <person name="Lauber J."/>
            <person name="Duesterhoeft A."/>
            <person name="Ehrlich S.D."/>
        </authorList>
    </citation>
    <scope>NUCLEOTIDE SEQUENCE [GENOMIC DNA]</scope>
    <source>
        <strain>168</strain>
    </source>
</reference>
<reference key="3">
    <citation type="journal article" date="1997" name="Nature">
        <title>The complete genome sequence of the Gram-positive bacterium Bacillus subtilis.</title>
        <authorList>
            <person name="Kunst F."/>
            <person name="Ogasawara N."/>
            <person name="Moszer I."/>
            <person name="Albertini A.M."/>
            <person name="Alloni G."/>
            <person name="Azevedo V."/>
            <person name="Bertero M.G."/>
            <person name="Bessieres P."/>
            <person name="Bolotin A."/>
            <person name="Borchert S."/>
            <person name="Borriss R."/>
            <person name="Boursier L."/>
            <person name="Brans A."/>
            <person name="Braun M."/>
            <person name="Brignell S.C."/>
            <person name="Bron S."/>
            <person name="Brouillet S."/>
            <person name="Bruschi C.V."/>
            <person name="Caldwell B."/>
            <person name="Capuano V."/>
            <person name="Carter N.M."/>
            <person name="Choi S.-K."/>
            <person name="Codani J.-J."/>
            <person name="Connerton I.F."/>
            <person name="Cummings N.J."/>
            <person name="Daniel R.A."/>
            <person name="Denizot F."/>
            <person name="Devine K.M."/>
            <person name="Duesterhoeft A."/>
            <person name="Ehrlich S.D."/>
            <person name="Emmerson P.T."/>
            <person name="Entian K.-D."/>
            <person name="Errington J."/>
            <person name="Fabret C."/>
            <person name="Ferrari E."/>
            <person name="Foulger D."/>
            <person name="Fritz C."/>
            <person name="Fujita M."/>
            <person name="Fujita Y."/>
            <person name="Fuma S."/>
            <person name="Galizzi A."/>
            <person name="Galleron N."/>
            <person name="Ghim S.-Y."/>
            <person name="Glaser P."/>
            <person name="Goffeau A."/>
            <person name="Golightly E.J."/>
            <person name="Grandi G."/>
            <person name="Guiseppi G."/>
            <person name="Guy B.J."/>
            <person name="Haga K."/>
            <person name="Haiech J."/>
            <person name="Harwood C.R."/>
            <person name="Henaut A."/>
            <person name="Hilbert H."/>
            <person name="Holsappel S."/>
            <person name="Hosono S."/>
            <person name="Hullo M.-F."/>
            <person name="Itaya M."/>
            <person name="Jones L.-M."/>
            <person name="Joris B."/>
            <person name="Karamata D."/>
            <person name="Kasahara Y."/>
            <person name="Klaerr-Blanchard M."/>
            <person name="Klein C."/>
            <person name="Kobayashi Y."/>
            <person name="Koetter P."/>
            <person name="Koningstein G."/>
            <person name="Krogh S."/>
            <person name="Kumano M."/>
            <person name="Kurita K."/>
            <person name="Lapidus A."/>
            <person name="Lardinois S."/>
            <person name="Lauber J."/>
            <person name="Lazarevic V."/>
            <person name="Lee S.-M."/>
            <person name="Levine A."/>
            <person name="Liu H."/>
            <person name="Masuda S."/>
            <person name="Mauel C."/>
            <person name="Medigue C."/>
            <person name="Medina N."/>
            <person name="Mellado R.P."/>
            <person name="Mizuno M."/>
            <person name="Moestl D."/>
            <person name="Nakai S."/>
            <person name="Noback M."/>
            <person name="Noone D."/>
            <person name="O'Reilly M."/>
            <person name="Ogawa K."/>
            <person name="Ogiwara A."/>
            <person name="Oudega B."/>
            <person name="Park S.-H."/>
            <person name="Parro V."/>
            <person name="Pohl T.M."/>
            <person name="Portetelle D."/>
            <person name="Porwollik S."/>
            <person name="Prescott A.M."/>
            <person name="Presecan E."/>
            <person name="Pujic P."/>
            <person name="Purnelle B."/>
            <person name="Rapoport G."/>
            <person name="Rey M."/>
            <person name="Reynolds S."/>
            <person name="Rieger M."/>
            <person name="Rivolta C."/>
            <person name="Rocha E."/>
            <person name="Roche B."/>
            <person name="Rose M."/>
            <person name="Sadaie Y."/>
            <person name="Sato T."/>
            <person name="Scanlan E."/>
            <person name="Schleich S."/>
            <person name="Schroeter R."/>
            <person name="Scoffone F."/>
            <person name="Sekiguchi J."/>
            <person name="Sekowska A."/>
            <person name="Seror S.J."/>
            <person name="Serror P."/>
            <person name="Shin B.-S."/>
            <person name="Soldo B."/>
            <person name="Sorokin A."/>
            <person name="Tacconi E."/>
            <person name="Takagi T."/>
            <person name="Takahashi H."/>
            <person name="Takemaru K."/>
            <person name="Takeuchi M."/>
            <person name="Tamakoshi A."/>
            <person name="Tanaka T."/>
            <person name="Terpstra P."/>
            <person name="Tognoni A."/>
            <person name="Tosato V."/>
            <person name="Uchiyama S."/>
            <person name="Vandenbol M."/>
            <person name="Vannier F."/>
            <person name="Vassarotti A."/>
            <person name="Viari A."/>
            <person name="Wambutt R."/>
            <person name="Wedler E."/>
            <person name="Wedler H."/>
            <person name="Weitzenegger T."/>
            <person name="Winters P."/>
            <person name="Wipat A."/>
            <person name="Yamamoto H."/>
            <person name="Yamane K."/>
            <person name="Yasumoto K."/>
            <person name="Yata K."/>
            <person name="Yoshida K."/>
            <person name="Yoshikawa H.-F."/>
            <person name="Zumstein E."/>
            <person name="Yoshikawa H."/>
            <person name="Danchin A."/>
        </authorList>
    </citation>
    <scope>NUCLEOTIDE SEQUENCE [LARGE SCALE GENOMIC DNA]</scope>
    <source>
        <strain>168</strain>
    </source>
</reference>
<dbReference type="EMBL" id="X92868">
    <property type="protein sequence ID" value="CAA63474.1"/>
    <property type="molecule type" value="Genomic_DNA"/>
</dbReference>
<dbReference type="EMBL" id="U93875">
    <property type="protein sequence ID" value="AAB80876.1"/>
    <property type="molecule type" value="Genomic_DNA"/>
</dbReference>
<dbReference type="EMBL" id="AL009126">
    <property type="protein sequence ID" value="CAB14636.1"/>
    <property type="molecule type" value="Genomic_DNA"/>
</dbReference>
<dbReference type="PIR" id="G69970">
    <property type="entry name" value="G69970"/>
</dbReference>
<dbReference type="RefSeq" id="NP_390572.1">
    <property type="nucleotide sequence ID" value="NC_000964.3"/>
</dbReference>
<dbReference type="RefSeq" id="WP_003229845.1">
    <property type="nucleotide sequence ID" value="NZ_OZ025638.1"/>
</dbReference>
<dbReference type="SMR" id="O07919"/>
<dbReference type="FunCoup" id="O07919">
    <property type="interactions" value="32"/>
</dbReference>
<dbReference type="STRING" id="224308.BSU26950"/>
<dbReference type="PaxDb" id="224308-BSU26950"/>
<dbReference type="DNASU" id="936783"/>
<dbReference type="EnsemblBacteria" id="CAB14636">
    <property type="protein sequence ID" value="CAB14636"/>
    <property type="gene ID" value="BSU_26950"/>
</dbReference>
<dbReference type="GeneID" id="936783"/>
<dbReference type="KEGG" id="bsu:BSU26950"/>
<dbReference type="PATRIC" id="fig|224308.179.peg.2927"/>
<dbReference type="eggNOG" id="ENOG50347MA">
    <property type="taxonomic scope" value="Bacteria"/>
</dbReference>
<dbReference type="InParanoid" id="O07919"/>
<dbReference type="OrthoDB" id="1913674at2"/>
<dbReference type="PhylomeDB" id="O07919"/>
<dbReference type="BioCyc" id="BSUB:BSU26950-MONOMER"/>
<dbReference type="Proteomes" id="UP000001570">
    <property type="component" value="Chromosome"/>
</dbReference>
<dbReference type="GO" id="GO:0030435">
    <property type="term" value="P:sporulation resulting in formation of a cellular spore"/>
    <property type="evidence" value="ECO:0007669"/>
    <property type="project" value="UniProtKB-KW"/>
</dbReference>
<dbReference type="Gene3D" id="1.20.1260.10">
    <property type="match status" value="1"/>
</dbReference>
<dbReference type="InterPro" id="IPR012347">
    <property type="entry name" value="Ferritin-like"/>
</dbReference>
<dbReference type="InterPro" id="IPR012851">
    <property type="entry name" value="Spore_coat_CotF-like"/>
</dbReference>
<dbReference type="PANTHER" id="PTHR39183">
    <property type="entry name" value="SPORE COAT PROTEIN F-LIKE PROTEIN YHCQ"/>
    <property type="match status" value="1"/>
</dbReference>
<dbReference type="PANTHER" id="PTHR39183:SF1">
    <property type="entry name" value="SPORE COAT PROTEIN F-LIKE PROTEIN YHCQ"/>
    <property type="match status" value="1"/>
</dbReference>
<sequence length="81" mass="9206">MDHQTLAAHEAVDLHEIVNFKTLCIAKSKLMQGLVFDQELKDLMEKDVQQSIQDLTELQAVYERASFQAPVPQSRPTPIIN</sequence>
<name>YRAG_BACSU</name>
<evidence type="ECO:0000250" key="1"/>
<evidence type="ECO:0000305" key="2"/>
<proteinExistence type="inferred from homology"/>
<comment type="subcellular location">
    <subcellularLocation>
        <location evidence="1">Spore coat</location>
    </subcellularLocation>
</comment>
<comment type="similarity">
    <text evidence="2">Belongs to the CotF family.</text>
</comment>
<feature type="chain" id="PRO_0000360486" description="Spore coat protein F-like protein YraG">
    <location>
        <begin position="1"/>
        <end position="81"/>
    </location>
</feature>
<gene>
    <name type="primary">yraG</name>
    <name type="ordered locus">BSU26950</name>
</gene>